<evidence type="ECO:0000255" key="1">
    <source>
        <dbReference type="HAMAP-Rule" id="MF_00445"/>
    </source>
</evidence>
<evidence type="ECO:0000305" key="2"/>
<sequence length="510" mass="56741">MIWHVQNENFILDSTRIFMKAFHLLLFHGSFIFPECILIFGLILLLMIDSTSDQKDRPWFYFISSTSLVMSITALLFRWKEEPIISFSGNFQTNNFNEIFQFLILLCSTLCIPLSVEYIECTEMAITEFLLFVLTATLGGMFLCGANDLITIFVAPECFSLCSYLLSGYTKRDVRSNEATTKYLLMGGASSSILVHGFSWLYGSSGGEIELQEIVNGLINTQMYNSPGISIALISTTVGIGFKLSPAPFHQWTPDVYEGSPTPVVAFLSVTSKVAASASATRIFDIPFYFSSNEWHLLLEILAILSMILGNLIAITQTSMKRMLAYSSIGQIGYVIIGIIVGDSNDGYASMITYMLFYISMNLGTFARIVSFGLRTGTDNIRDYAGLYTKDPFLALSSALCLLSLGGLPPLAGFFGKLHLFWCGWQAGLYFLVSIGLLTSVVSIYYYLKIIKLLMTGRNQEITPHVRNYRRSPLRSNNSIEWSMTVCVIASTIPGISMNPILAIAQDTLF</sequence>
<proteinExistence type="inferred from homology"/>
<geneLocation type="chloroplast"/>
<comment type="function">
    <text evidence="1">NDH shuttles electrons from NAD(P)H:plastoquinone, via FMN and iron-sulfur (Fe-S) centers, to quinones in the photosynthetic chain and possibly in a chloroplast respiratory chain. The immediate electron acceptor for the enzyme in this species is believed to be plastoquinone. Couples the redox reaction to proton translocation, and thus conserves the redox energy in a proton gradient.</text>
</comment>
<comment type="catalytic activity">
    <reaction evidence="1">
        <text>a plastoquinone + NADH + (n+1) H(+)(in) = a plastoquinol + NAD(+) + n H(+)(out)</text>
        <dbReference type="Rhea" id="RHEA:42608"/>
        <dbReference type="Rhea" id="RHEA-COMP:9561"/>
        <dbReference type="Rhea" id="RHEA-COMP:9562"/>
        <dbReference type="ChEBI" id="CHEBI:15378"/>
        <dbReference type="ChEBI" id="CHEBI:17757"/>
        <dbReference type="ChEBI" id="CHEBI:57540"/>
        <dbReference type="ChEBI" id="CHEBI:57945"/>
        <dbReference type="ChEBI" id="CHEBI:62192"/>
    </reaction>
</comment>
<comment type="catalytic activity">
    <reaction evidence="1">
        <text>a plastoquinone + NADPH + (n+1) H(+)(in) = a plastoquinol + NADP(+) + n H(+)(out)</text>
        <dbReference type="Rhea" id="RHEA:42612"/>
        <dbReference type="Rhea" id="RHEA-COMP:9561"/>
        <dbReference type="Rhea" id="RHEA-COMP:9562"/>
        <dbReference type="ChEBI" id="CHEBI:15378"/>
        <dbReference type="ChEBI" id="CHEBI:17757"/>
        <dbReference type="ChEBI" id="CHEBI:57783"/>
        <dbReference type="ChEBI" id="CHEBI:58349"/>
        <dbReference type="ChEBI" id="CHEBI:62192"/>
    </reaction>
</comment>
<comment type="subunit">
    <text evidence="1">NDH is composed of at least 16 different subunits, 5 of which are encoded in the nucleus.</text>
</comment>
<comment type="subcellular location">
    <subcellularLocation>
        <location evidence="1">Plastid</location>
        <location evidence="1">Chloroplast thylakoid membrane</location>
        <topology evidence="1">Multi-pass membrane protein</topology>
    </subcellularLocation>
</comment>
<comment type="similarity">
    <text evidence="1">Belongs to the complex I subunit 2 family.</text>
</comment>
<comment type="sequence caution" evidence="2">
    <conflict type="erroneous initiation">
        <sequence resource="EMBL-CDS" id="AAN32088"/>
    </conflict>
</comment>
<organism>
    <name type="scientific">Maianthemum racemosum</name>
    <name type="common">False Solomon's-seal</name>
    <name type="synonym">Smilacina racemosa</name>
    <dbReference type="NCBI Taxonomy" id="39530"/>
    <lineage>
        <taxon>Eukaryota</taxon>
        <taxon>Viridiplantae</taxon>
        <taxon>Streptophyta</taxon>
        <taxon>Embryophyta</taxon>
        <taxon>Tracheophyta</taxon>
        <taxon>Spermatophyta</taxon>
        <taxon>Magnoliopsida</taxon>
        <taxon>Liliopsida</taxon>
        <taxon>Asparagales</taxon>
        <taxon>Asparagaceae</taxon>
        <taxon>Nolinoideae</taxon>
        <taxon>Maianthemum</taxon>
    </lineage>
</organism>
<name>NU2C_MAIRA</name>
<accession>Q67IB5</accession>
<reference key="1">
    <citation type="submission" date="2002-09" db="EMBL/GenBank/DDBJ databases">
        <title>Phylogenetic relationships among the major lineages of Asparagales based on a large chloroplast data set.</title>
        <authorList>
            <person name="McPherson M.A."/>
            <person name="Rai H.S."/>
            <person name="Wong W.A."/>
            <person name="Graham S.W."/>
        </authorList>
    </citation>
    <scope>NUCLEOTIDE SEQUENCE [GENOMIC DNA]</scope>
</reference>
<protein>
    <recommendedName>
        <fullName evidence="1">NAD(P)H-quinone oxidoreductase subunit 2, chloroplastic</fullName>
        <ecNumber evidence="1">7.1.1.-</ecNumber>
    </recommendedName>
    <alternativeName>
        <fullName evidence="1">NAD(P)H dehydrogenase, subunit 2</fullName>
    </alternativeName>
    <alternativeName>
        <fullName evidence="1">NADH-plastoquinone oxidoreductase subunit 2</fullName>
    </alternativeName>
</protein>
<dbReference type="EC" id="7.1.1.-" evidence="1"/>
<dbReference type="EMBL" id="AY147494">
    <property type="protein sequence ID" value="AAN32088.1"/>
    <property type="status" value="ALT_INIT"/>
    <property type="molecule type" value="Genomic_DNA"/>
</dbReference>
<dbReference type="SMR" id="Q67IB5"/>
<dbReference type="GO" id="GO:0009535">
    <property type="term" value="C:chloroplast thylakoid membrane"/>
    <property type="evidence" value="ECO:0007669"/>
    <property type="project" value="UniProtKB-SubCell"/>
</dbReference>
<dbReference type="GO" id="GO:0008137">
    <property type="term" value="F:NADH dehydrogenase (ubiquinone) activity"/>
    <property type="evidence" value="ECO:0007669"/>
    <property type="project" value="InterPro"/>
</dbReference>
<dbReference type="GO" id="GO:0048038">
    <property type="term" value="F:quinone binding"/>
    <property type="evidence" value="ECO:0007669"/>
    <property type="project" value="UniProtKB-KW"/>
</dbReference>
<dbReference type="GO" id="GO:0042773">
    <property type="term" value="P:ATP synthesis coupled electron transport"/>
    <property type="evidence" value="ECO:0007669"/>
    <property type="project" value="InterPro"/>
</dbReference>
<dbReference type="GO" id="GO:0019684">
    <property type="term" value="P:photosynthesis, light reaction"/>
    <property type="evidence" value="ECO:0007669"/>
    <property type="project" value="UniProtKB-UniRule"/>
</dbReference>
<dbReference type="HAMAP" id="MF_00445">
    <property type="entry name" value="NDH1_NuoN_1"/>
    <property type="match status" value="1"/>
</dbReference>
<dbReference type="InterPro" id="IPR010096">
    <property type="entry name" value="NADH-Q_OxRdtase_suN/2"/>
</dbReference>
<dbReference type="InterPro" id="IPR001750">
    <property type="entry name" value="ND/Mrp_TM"/>
</dbReference>
<dbReference type="InterPro" id="IPR045693">
    <property type="entry name" value="Ndh2_N"/>
</dbReference>
<dbReference type="NCBIfam" id="TIGR01770">
    <property type="entry name" value="NDH_I_N"/>
    <property type="match status" value="1"/>
</dbReference>
<dbReference type="NCBIfam" id="NF002701">
    <property type="entry name" value="PRK02504.1"/>
    <property type="match status" value="1"/>
</dbReference>
<dbReference type="PANTHER" id="PTHR22773">
    <property type="entry name" value="NADH DEHYDROGENASE"/>
    <property type="match status" value="1"/>
</dbReference>
<dbReference type="Pfam" id="PF19530">
    <property type="entry name" value="Ndh2_N"/>
    <property type="match status" value="1"/>
</dbReference>
<dbReference type="Pfam" id="PF00361">
    <property type="entry name" value="Proton_antipo_M"/>
    <property type="match status" value="1"/>
</dbReference>
<dbReference type="PRINTS" id="PR01434">
    <property type="entry name" value="NADHDHGNASE5"/>
</dbReference>
<gene>
    <name evidence="1" type="primary">ndhB</name>
</gene>
<feature type="chain" id="PRO_0000117664" description="NAD(P)H-quinone oxidoreductase subunit 2, chloroplastic">
    <location>
        <begin position="1"/>
        <end position="510"/>
    </location>
</feature>
<feature type="transmembrane region" description="Helical" evidence="1">
    <location>
        <begin position="24"/>
        <end position="44"/>
    </location>
</feature>
<feature type="transmembrane region" description="Helical" evidence="1">
    <location>
        <begin position="59"/>
        <end position="79"/>
    </location>
</feature>
<feature type="transmembrane region" description="Helical" evidence="1">
    <location>
        <begin position="99"/>
        <end position="119"/>
    </location>
</feature>
<feature type="transmembrane region" description="Helical" evidence="1">
    <location>
        <begin position="124"/>
        <end position="144"/>
    </location>
</feature>
<feature type="transmembrane region" description="Helical" evidence="1">
    <location>
        <begin position="149"/>
        <end position="169"/>
    </location>
</feature>
<feature type="transmembrane region" description="Helical" evidence="1">
    <location>
        <begin position="183"/>
        <end position="203"/>
    </location>
</feature>
<feature type="transmembrane region" description="Helical" evidence="1">
    <location>
        <begin position="295"/>
        <end position="315"/>
    </location>
</feature>
<feature type="transmembrane region" description="Helical" evidence="1">
    <location>
        <begin position="323"/>
        <end position="343"/>
    </location>
</feature>
<feature type="transmembrane region" description="Helical" evidence="1">
    <location>
        <begin position="347"/>
        <end position="367"/>
    </location>
</feature>
<feature type="transmembrane region" description="Helical" evidence="1">
    <location>
        <begin position="395"/>
        <end position="415"/>
    </location>
</feature>
<feature type="transmembrane region" description="Helical" evidence="1">
    <location>
        <begin position="418"/>
        <end position="438"/>
    </location>
</feature>
<keyword id="KW-0150">Chloroplast</keyword>
<keyword id="KW-0472">Membrane</keyword>
<keyword id="KW-0520">NAD</keyword>
<keyword id="KW-0521">NADP</keyword>
<keyword id="KW-0934">Plastid</keyword>
<keyword id="KW-0618">Plastoquinone</keyword>
<keyword id="KW-0874">Quinone</keyword>
<keyword id="KW-0793">Thylakoid</keyword>
<keyword id="KW-1278">Translocase</keyword>
<keyword id="KW-0812">Transmembrane</keyword>
<keyword id="KW-1133">Transmembrane helix</keyword>
<keyword id="KW-0813">Transport</keyword>